<reference key="1">
    <citation type="journal article" date="2008" name="J. Bacteriol.">
        <title>The complete genome sequence of Escherichia coli DH10B: insights into the biology of a laboratory workhorse.</title>
        <authorList>
            <person name="Durfee T."/>
            <person name="Nelson R."/>
            <person name="Baldwin S."/>
            <person name="Plunkett G. III"/>
            <person name="Burland V."/>
            <person name="Mau B."/>
            <person name="Petrosino J.F."/>
            <person name="Qin X."/>
            <person name="Muzny D.M."/>
            <person name="Ayele M."/>
            <person name="Gibbs R.A."/>
            <person name="Csorgo B."/>
            <person name="Posfai G."/>
            <person name="Weinstock G.M."/>
            <person name="Blattner F.R."/>
        </authorList>
    </citation>
    <scope>NUCLEOTIDE SEQUENCE [LARGE SCALE GENOMIC DNA]</scope>
    <source>
        <strain>K12 / DH10B</strain>
    </source>
</reference>
<protein>
    <recommendedName>
        <fullName evidence="1">Small ribosomal subunit protein uS2</fullName>
    </recommendedName>
    <alternativeName>
        <fullName evidence="2">30S ribosomal protein S2</fullName>
    </alternativeName>
</protein>
<keyword id="KW-0687">Ribonucleoprotein</keyword>
<keyword id="KW-0689">Ribosomal protein</keyword>
<name>RS2_ECODH</name>
<feature type="chain" id="PRO_1000115017" description="Small ribosomal subunit protein uS2">
    <location>
        <begin position="1"/>
        <end position="241"/>
    </location>
</feature>
<gene>
    <name evidence="1" type="primary">rpsB</name>
    <name type="ordered locus">ECDH10B_0149</name>
</gene>
<comment type="similarity">
    <text evidence="1">Belongs to the universal ribosomal protein uS2 family.</text>
</comment>
<accession>B1XD38</accession>
<sequence length="241" mass="26744">MATVSMRDMLKAGVHFGHQTRYWNPKMKPFIFGARNKVHIINLEKTVPMFNEALAELNKIASRKGKILFVGTKRAASEAVKDAALSCDQFFVNHRWLGGMLTNWKTVRQSIKRLKDLETQSQDGTFDKLTKKEALMRTRELEKLENSLGGIKDMGGLPDALFVIDADHEHIAIKEANNLGIPVFAIVDTNSDPDGVDFVIPGNDDAIRAVTLYLGAVAATVREGRSQDLASQAEESFVEAE</sequence>
<organism>
    <name type="scientific">Escherichia coli (strain K12 / DH10B)</name>
    <dbReference type="NCBI Taxonomy" id="316385"/>
    <lineage>
        <taxon>Bacteria</taxon>
        <taxon>Pseudomonadati</taxon>
        <taxon>Pseudomonadota</taxon>
        <taxon>Gammaproteobacteria</taxon>
        <taxon>Enterobacterales</taxon>
        <taxon>Enterobacteriaceae</taxon>
        <taxon>Escherichia</taxon>
    </lineage>
</organism>
<dbReference type="EMBL" id="CP000948">
    <property type="protein sequence ID" value="ACB01347.1"/>
    <property type="molecule type" value="Genomic_DNA"/>
</dbReference>
<dbReference type="RefSeq" id="WP_000246882.1">
    <property type="nucleotide sequence ID" value="NC_010473.1"/>
</dbReference>
<dbReference type="SMR" id="B1XD38"/>
<dbReference type="GeneID" id="89519558"/>
<dbReference type="KEGG" id="ecd:ECDH10B_0149"/>
<dbReference type="HOGENOM" id="CLU_040318_1_2_6"/>
<dbReference type="GO" id="GO:0022627">
    <property type="term" value="C:cytosolic small ribosomal subunit"/>
    <property type="evidence" value="ECO:0007669"/>
    <property type="project" value="TreeGrafter"/>
</dbReference>
<dbReference type="GO" id="GO:0003735">
    <property type="term" value="F:structural constituent of ribosome"/>
    <property type="evidence" value="ECO:0007669"/>
    <property type="project" value="InterPro"/>
</dbReference>
<dbReference type="GO" id="GO:0006412">
    <property type="term" value="P:translation"/>
    <property type="evidence" value="ECO:0007669"/>
    <property type="project" value="UniProtKB-UniRule"/>
</dbReference>
<dbReference type="CDD" id="cd01425">
    <property type="entry name" value="RPS2"/>
    <property type="match status" value="1"/>
</dbReference>
<dbReference type="FunFam" id="1.10.287.610:FF:000001">
    <property type="entry name" value="30S ribosomal protein S2"/>
    <property type="match status" value="1"/>
</dbReference>
<dbReference type="Gene3D" id="3.40.50.10490">
    <property type="entry name" value="Glucose-6-phosphate isomerase like protein, domain 1"/>
    <property type="match status" value="1"/>
</dbReference>
<dbReference type="Gene3D" id="1.10.287.610">
    <property type="entry name" value="Helix hairpin bin"/>
    <property type="match status" value="1"/>
</dbReference>
<dbReference type="HAMAP" id="MF_00291_B">
    <property type="entry name" value="Ribosomal_uS2_B"/>
    <property type="match status" value="1"/>
</dbReference>
<dbReference type="InterPro" id="IPR001865">
    <property type="entry name" value="Ribosomal_uS2"/>
</dbReference>
<dbReference type="InterPro" id="IPR005706">
    <property type="entry name" value="Ribosomal_uS2_bac/mit/plastid"/>
</dbReference>
<dbReference type="InterPro" id="IPR018130">
    <property type="entry name" value="Ribosomal_uS2_CS"/>
</dbReference>
<dbReference type="InterPro" id="IPR023591">
    <property type="entry name" value="Ribosomal_uS2_flav_dom_sf"/>
</dbReference>
<dbReference type="NCBIfam" id="TIGR01011">
    <property type="entry name" value="rpsB_bact"/>
    <property type="match status" value="1"/>
</dbReference>
<dbReference type="PANTHER" id="PTHR12534">
    <property type="entry name" value="30S RIBOSOMAL PROTEIN S2 PROKARYOTIC AND ORGANELLAR"/>
    <property type="match status" value="1"/>
</dbReference>
<dbReference type="PANTHER" id="PTHR12534:SF0">
    <property type="entry name" value="SMALL RIBOSOMAL SUBUNIT PROTEIN US2M"/>
    <property type="match status" value="1"/>
</dbReference>
<dbReference type="Pfam" id="PF00318">
    <property type="entry name" value="Ribosomal_S2"/>
    <property type="match status" value="1"/>
</dbReference>
<dbReference type="PRINTS" id="PR00395">
    <property type="entry name" value="RIBOSOMALS2"/>
</dbReference>
<dbReference type="SUPFAM" id="SSF52313">
    <property type="entry name" value="Ribosomal protein S2"/>
    <property type="match status" value="1"/>
</dbReference>
<dbReference type="PROSITE" id="PS00962">
    <property type="entry name" value="RIBOSOMAL_S2_1"/>
    <property type="match status" value="1"/>
</dbReference>
<dbReference type="PROSITE" id="PS00963">
    <property type="entry name" value="RIBOSOMAL_S2_2"/>
    <property type="match status" value="1"/>
</dbReference>
<evidence type="ECO:0000255" key="1">
    <source>
        <dbReference type="HAMAP-Rule" id="MF_00291"/>
    </source>
</evidence>
<evidence type="ECO:0000305" key="2"/>
<proteinExistence type="inferred from homology"/>